<dbReference type="EMBL" id="AF288175">
    <property type="protein sequence ID" value="AAK84660.1"/>
    <property type="molecule type" value="Genomic_DNA"/>
</dbReference>
<dbReference type="EMBL" id="FQ312003">
    <property type="protein sequence ID" value="CBW18234.1"/>
    <property type="molecule type" value="Genomic_DNA"/>
</dbReference>
<dbReference type="RefSeq" id="WP_001240418.1">
    <property type="nucleotide sequence ID" value="NZ_QASL01000003.1"/>
</dbReference>
<dbReference type="SMR" id="E1WH94"/>
<dbReference type="KEGG" id="sey:SL1344_2138"/>
<dbReference type="PATRIC" id="fig|216597.6.peg.2374"/>
<dbReference type="HOGENOM" id="CLU_045945_0_1_6"/>
<dbReference type="BioCyc" id="SENT216597:SL1344_RS11105-MONOMER"/>
<dbReference type="Proteomes" id="UP000008962">
    <property type="component" value="Chromosome"/>
</dbReference>
<dbReference type="GO" id="GO:0003677">
    <property type="term" value="F:DNA binding"/>
    <property type="evidence" value="ECO:0007669"/>
    <property type="project" value="UniProtKB-KW"/>
</dbReference>
<dbReference type="GO" id="GO:0003700">
    <property type="term" value="F:DNA-binding transcription factor activity"/>
    <property type="evidence" value="ECO:0007669"/>
    <property type="project" value="InterPro"/>
</dbReference>
<dbReference type="CDD" id="cd04763">
    <property type="entry name" value="HTH_MlrA-like"/>
    <property type="match status" value="1"/>
</dbReference>
<dbReference type="FunFam" id="1.10.1660.10:FF:000007">
    <property type="entry name" value="HTH-type transcriptional regulator MlrA"/>
    <property type="match status" value="1"/>
</dbReference>
<dbReference type="Gene3D" id="1.10.1660.10">
    <property type="match status" value="1"/>
</dbReference>
<dbReference type="InterPro" id="IPR009061">
    <property type="entry name" value="DNA-bd_dom_put_sf"/>
</dbReference>
<dbReference type="InterPro" id="IPR000551">
    <property type="entry name" value="MerR-type_HTH_dom"/>
</dbReference>
<dbReference type="InterPro" id="IPR047057">
    <property type="entry name" value="MerR_fam"/>
</dbReference>
<dbReference type="InterPro" id="IPR053987">
    <property type="entry name" value="MlrA-like_C"/>
</dbReference>
<dbReference type="InterPro" id="IPR053988">
    <property type="entry name" value="MlrA-like_helical"/>
</dbReference>
<dbReference type="InterPro" id="IPR048225">
    <property type="entry name" value="MlrA-like_HTH"/>
</dbReference>
<dbReference type="NCBIfam" id="NF011617">
    <property type="entry name" value="PRK15043.1"/>
    <property type="match status" value="1"/>
</dbReference>
<dbReference type="PANTHER" id="PTHR30204:SF67">
    <property type="entry name" value="HTH-TYPE TRANSCRIPTIONAL REGULATOR MLRA-RELATED"/>
    <property type="match status" value="1"/>
</dbReference>
<dbReference type="PANTHER" id="PTHR30204">
    <property type="entry name" value="REDOX-CYCLING DRUG-SENSING TRANSCRIPTIONAL ACTIVATOR SOXR"/>
    <property type="match status" value="1"/>
</dbReference>
<dbReference type="Pfam" id="PF13411">
    <property type="entry name" value="MerR_1"/>
    <property type="match status" value="1"/>
</dbReference>
<dbReference type="Pfam" id="PF22267">
    <property type="entry name" value="MlrA_C"/>
    <property type="match status" value="1"/>
</dbReference>
<dbReference type="Pfam" id="PF22270">
    <property type="entry name" value="MlrA_helical"/>
    <property type="match status" value="1"/>
</dbReference>
<dbReference type="SMART" id="SM00422">
    <property type="entry name" value="HTH_MERR"/>
    <property type="match status" value="1"/>
</dbReference>
<dbReference type="SUPFAM" id="SSF46955">
    <property type="entry name" value="Putative DNA-binding domain"/>
    <property type="match status" value="1"/>
</dbReference>
<dbReference type="PROSITE" id="PS00552">
    <property type="entry name" value="HTH_MERR_1"/>
    <property type="match status" value="1"/>
</dbReference>
<dbReference type="PROSITE" id="PS50937">
    <property type="entry name" value="HTH_MERR_2"/>
    <property type="match status" value="1"/>
</dbReference>
<protein>
    <recommendedName>
        <fullName evidence="4">HTH-type transcriptional regulator MlrA</fullName>
    </recommendedName>
    <alternativeName>
        <fullName evidence="3">MerR-like regulator A</fullName>
    </alternativeName>
</protein>
<comment type="function">
    <text evidence="2">Transcriptional activator of csgD, which is required for production of the curli (AgF).</text>
</comment>
<reference key="1">
    <citation type="journal article" date="2001" name="Mol. Microbiol.">
        <title>MlrA, a novel regulator of curli (AgF) and extracellular matrix synthesis by Escherichia coli and Salmonella enterica serovar Typhimurium.</title>
        <authorList>
            <person name="Brown P.K."/>
            <person name="Dozois C.M."/>
            <person name="Nickerson C.A."/>
            <person name="Zuppardo A."/>
            <person name="Terlonge J."/>
            <person name="Curtiss R. III"/>
        </authorList>
    </citation>
    <scope>NUCLEOTIDE SEQUENCE [GENOMIC DNA]</scope>
    <scope>FUNCTION</scope>
    <source>
        <strain>SL1344</strain>
    </source>
</reference>
<reference key="2">
    <citation type="journal article" date="2012" name="Proc. Natl. Acad. Sci. U.S.A.">
        <title>The transcriptional landscape and small RNAs of Salmonella enterica serovar Typhimurium.</title>
        <authorList>
            <person name="Kroger C."/>
            <person name="Dillon S.C."/>
            <person name="Cameron A.D."/>
            <person name="Papenfort K."/>
            <person name="Sivasankaran S.K."/>
            <person name="Hokamp K."/>
            <person name="Chao Y."/>
            <person name="Sittka A."/>
            <person name="Hebrard M."/>
            <person name="Handler K."/>
            <person name="Colgan A."/>
            <person name="Leekitcharoenphon P."/>
            <person name="Langridge G.C."/>
            <person name="Lohan A.J."/>
            <person name="Loftus B."/>
            <person name="Lucchini S."/>
            <person name="Ussery D.W."/>
            <person name="Dorman C.J."/>
            <person name="Thomson N.R."/>
            <person name="Vogel J."/>
            <person name="Hinton J.C."/>
        </authorList>
    </citation>
    <scope>NUCLEOTIDE SEQUENCE [LARGE SCALE GENOMIC DNA]</scope>
    <source>
        <strain>SL1344</strain>
    </source>
</reference>
<keyword id="KW-0010">Activator</keyword>
<keyword id="KW-0238">DNA-binding</keyword>
<keyword id="KW-0804">Transcription</keyword>
<keyword id="KW-0805">Transcription regulation</keyword>
<sequence>MALYTIGEVALLCDINPVTLRAWQRRYGLLKPQRTDGGHRLFNDADIDRIREIKRWIDNGVQVSKVKVLLSSDSSEQPNGWREQQEILLHYLQSSNLHSLRLWVKERGQDYPAQTLTTNLFVPLRRRLQCQQPALQALLGILDGILINYIALCLASARKKQGKDALVIGWNIHDTTRLWLEGWVASQQGWRIDVLAHSLSQFRPELFDGKTLLVWCGENQTLAQQQQLLAWRAQGRDIHPLGV</sequence>
<evidence type="ECO:0000255" key="1">
    <source>
        <dbReference type="PROSITE-ProRule" id="PRU00254"/>
    </source>
</evidence>
<evidence type="ECO:0000269" key="2">
    <source>
    </source>
</evidence>
<evidence type="ECO:0000303" key="3">
    <source>
    </source>
</evidence>
<evidence type="ECO:0000305" key="4"/>
<name>MLRA_SALTS</name>
<gene>
    <name evidence="3" type="primary">mlrA</name>
    <name type="ordered locus">SL1344_2138</name>
</gene>
<proteinExistence type="predicted"/>
<feature type="chain" id="PRO_0000405423" description="HTH-type transcriptional regulator MlrA">
    <location>
        <begin position="1"/>
        <end position="243"/>
    </location>
</feature>
<feature type="domain" description="HTH merR-type" evidence="1">
    <location>
        <begin position="3"/>
        <end position="72"/>
    </location>
</feature>
<feature type="DNA-binding region" description="H-T-H motif" evidence="1">
    <location>
        <begin position="6"/>
        <end position="25"/>
    </location>
</feature>
<accession>E1WH94</accession>
<accession>P58398</accession>
<organism>
    <name type="scientific">Salmonella typhimurium (strain SL1344)</name>
    <dbReference type="NCBI Taxonomy" id="216597"/>
    <lineage>
        <taxon>Bacteria</taxon>
        <taxon>Pseudomonadati</taxon>
        <taxon>Pseudomonadota</taxon>
        <taxon>Gammaproteobacteria</taxon>
        <taxon>Enterobacterales</taxon>
        <taxon>Enterobacteriaceae</taxon>
        <taxon>Salmonella</taxon>
    </lineage>
</organism>